<accession>Q8HVL1</accession>
<gene>
    <name evidence="1" type="primary">ndhI</name>
</gene>
<geneLocation type="chloroplast"/>
<comment type="function">
    <text evidence="1">NDH shuttles electrons from NAD(P)H:plastoquinone, via FMN and iron-sulfur (Fe-S) centers, to quinones in the photosynthetic chain and possibly in a chloroplast respiratory chain. The immediate electron acceptor for the enzyme in this species is believed to be plastoquinone. Couples the redox reaction to proton translocation, and thus conserves the redox energy in a proton gradient.</text>
</comment>
<comment type="catalytic activity">
    <reaction evidence="1">
        <text>a plastoquinone + NADH + (n+1) H(+)(in) = a plastoquinol + NAD(+) + n H(+)(out)</text>
        <dbReference type="Rhea" id="RHEA:42608"/>
        <dbReference type="Rhea" id="RHEA-COMP:9561"/>
        <dbReference type="Rhea" id="RHEA-COMP:9562"/>
        <dbReference type="ChEBI" id="CHEBI:15378"/>
        <dbReference type="ChEBI" id="CHEBI:17757"/>
        <dbReference type="ChEBI" id="CHEBI:57540"/>
        <dbReference type="ChEBI" id="CHEBI:57945"/>
        <dbReference type="ChEBI" id="CHEBI:62192"/>
    </reaction>
</comment>
<comment type="catalytic activity">
    <reaction evidence="1">
        <text>a plastoquinone + NADPH + (n+1) H(+)(in) = a plastoquinol + NADP(+) + n H(+)(out)</text>
        <dbReference type="Rhea" id="RHEA:42612"/>
        <dbReference type="Rhea" id="RHEA-COMP:9561"/>
        <dbReference type="Rhea" id="RHEA-COMP:9562"/>
        <dbReference type="ChEBI" id="CHEBI:15378"/>
        <dbReference type="ChEBI" id="CHEBI:17757"/>
        <dbReference type="ChEBI" id="CHEBI:57783"/>
        <dbReference type="ChEBI" id="CHEBI:58349"/>
        <dbReference type="ChEBI" id="CHEBI:62192"/>
    </reaction>
</comment>
<comment type="cofactor">
    <cofactor evidence="1">
        <name>[4Fe-4S] cluster</name>
        <dbReference type="ChEBI" id="CHEBI:49883"/>
    </cofactor>
    <text evidence="1">Binds 2 [4Fe-4S] clusters per subunit.</text>
</comment>
<comment type="subunit">
    <text evidence="1">NDH is composed of at least 16 different subunits, 5 of which are encoded in the nucleus.</text>
</comment>
<comment type="subcellular location">
    <subcellularLocation>
        <location evidence="1">Plastid</location>
        <location evidence="1">Chloroplast thylakoid membrane</location>
        <topology evidence="1">Peripheral membrane protein</topology>
    </subcellularLocation>
</comment>
<comment type="similarity">
    <text evidence="1">Belongs to the complex I 23 kDa subunit family.</text>
</comment>
<name>NDHI_PERMO</name>
<reference key="1">
    <citation type="submission" date="2003-01" db="EMBL/GenBank/DDBJ databases">
        <title>Chloroplast DNA phylogeny of tribe Heliantheae (Asteraceae).</title>
        <authorList>
            <person name="Panero J.L."/>
            <person name="Baldwin B.G."/>
            <person name="Schilling E.E."/>
            <person name="Clevinger J.A."/>
        </authorList>
    </citation>
    <scope>NUCLEOTIDE SEQUENCE [GENOMIC DNA]</scope>
</reference>
<sequence length="166" mass="19489">MFPMVTEFMNYGQQTIRAARYIGQGFMITLSHANRLPVTIQYPYEKLITSERFRGRIHFEFDKCIACEVCVRVCPIDLPVVDWKLETDIRKKRLLNYSIDFGICIFCGNCVEYCPTNCLSMTEEYELSTYDRHELNYNQIALGRLPMSIIDDYTIRTILNLPEIKT</sequence>
<keyword id="KW-0004">4Fe-4S</keyword>
<keyword id="KW-0150">Chloroplast</keyword>
<keyword id="KW-0408">Iron</keyword>
<keyword id="KW-0411">Iron-sulfur</keyword>
<keyword id="KW-0472">Membrane</keyword>
<keyword id="KW-0479">Metal-binding</keyword>
<keyword id="KW-0520">NAD</keyword>
<keyword id="KW-0521">NADP</keyword>
<keyword id="KW-0934">Plastid</keyword>
<keyword id="KW-0618">Plastoquinone</keyword>
<keyword id="KW-0874">Quinone</keyword>
<keyword id="KW-0677">Repeat</keyword>
<keyword id="KW-0793">Thylakoid</keyword>
<keyword id="KW-1278">Translocase</keyword>
<feature type="chain" id="PRO_0000250830" description="NAD(P)H-quinone oxidoreductase subunit I, chloroplastic">
    <location>
        <begin position="1"/>
        <end position="166"/>
    </location>
</feature>
<feature type="domain" description="4Fe-4S ferredoxin-type 1" evidence="1">
    <location>
        <begin position="55"/>
        <end position="84"/>
    </location>
</feature>
<feature type="domain" description="4Fe-4S ferredoxin-type 2" evidence="1">
    <location>
        <begin position="95"/>
        <end position="124"/>
    </location>
</feature>
<feature type="binding site" evidence="1">
    <location>
        <position position="64"/>
    </location>
    <ligand>
        <name>[4Fe-4S] cluster</name>
        <dbReference type="ChEBI" id="CHEBI:49883"/>
        <label>1</label>
    </ligand>
</feature>
<feature type="binding site" evidence="1">
    <location>
        <position position="67"/>
    </location>
    <ligand>
        <name>[4Fe-4S] cluster</name>
        <dbReference type="ChEBI" id="CHEBI:49883"/>
        <label>1</label>
    </ligand>
</feature>
<feature type="binding site" evidence="1">
    <location>
        <position position="70"/>
    </location>
    <ligand>
        <name>[4Fe-4S] cluster</name>
        <dbReference type="ChEBI" id="CHEBI:49883"/>
        <label>1</label>
    </ligand>
</feature>
<feature type="binding site" evidence="1">
    <location>
        <position position="74"/>
    </location>
    <ligand>
        <name>[4Fe-4S] cluster</name>
        <dbReference type="ChEBI" id="CHEBI:49883"/>
        <label>2</label>
    </ligand>
</feature>
<feature type="binding site" evidence="1">
    <location>
        <position position="104"/>
    </location>
    <ligand>
        <name>[4Fe-4S] cluster</name>
        <dbReference type="ChEBI" id="CHEBI:49883"/>
        <label>2</label>
    </ligand>
</feature>
<feature type="binding site" evidence="1">
    <location>
        <position position="107"/>
    </location>
    <ligand>
        <name>[4Fe-4S] cluster</name>
        <dbReference type="ChEBI" id="CHEBI:49883"/>
        <label>2</label>
    </ligand>
</feature>
<feature type="binding site" evidence="1">
    <location>
        <position position="110"/>
    </location>
    <ligand>
        <name>[4Fe-4S] cluster</name>
        <dbReference type="ChEBI" id="CHEBI:49883"/>
        <label>2</label>
    </ligand>
</feature>
<feature type="binding site" evidence="1">
    <location>
        <position position="114"/>
    </location>
    <ligand>
        <name>[4Fe-4S] cluster</name>
        <dbReference type="ChEBI" id="CHEBI:49883"/>
        <label>1</label>
    </ligand>
</feature>
<evidence type="ECO:0000255" key="1">
    <source>
        <dbReference type="HAMAP-Rule" id="MF_01351"/>
    </source>
</evidence>
<protein>
    <recommendedName>
        <fullName evidence="1">NAD(P)H-quinone oxidoreductase subunit I, chloroplastic</fullName>
        <ecNumber evidence="1">7.1.1.-</ecNumber>
    </recommendedName>
    <alternativeName>
        <fullName evidence="1">NAD(P)H dehydrogenase subunit I</fullName>
        <shortName evidence="1">NDH subunit I</shortName>
    </alternativeName>
    <alternativeName>
        <fullName evidence="1">NADH-plastoquinone oxidoreductase subunit I</fullName>
    </alternativeName>
</protein>
<organism>
    <name type="scientific">Perymenium macrocephalum</name>
    <dbReference type="NCBI Taxonomy" id="183067"/>
    <lineage>
        <taxon>Eukaryota</taxon>
        <taxon>Viridiplantae</taxon>
        <taxon>Streptophyta</taxon>
        <taxon>Embryophyta</taxon>
        <taxon>Tracheophyta</taxon>
        <taxon>Spermatophyta</taxon>
        <taxon>Magnoliopsida</taxon>
        <taxon>eudicotyledons</taxon>
        <taxon>Gunneridae</taxon>
        <taxon>Pentapetalae</taxon>
        <taxon>asterids</taxon>
        <taxon>campanulids</taxon>
        <taxon>Asterales</taxon>
        <taxon>Asteraceae</taxon>
        <taxon>Asteroideae</taxon>
        <taxon>Heliantheae alliance</taxon>
        <taxon>Heliantheae</taxon>
        <taxon>Perymenium</taxon>
    </lineage>
</organism>
<dbReference type="EC" id="7.1.1.-" evidence="1"/>
<dbReference type="EMBL" id="AF383833">
    <property type="protein sequence ID" value="AAN61793.1"/>
    <property type="molecule type" value="Genomic_DNA"/>
</dbReference>
<dbReference type="SMR" id="Q8HVL1"/>
<dbReference type="GO" id="GO:0009535">
    <property type="term" value="C:chloroplast thylakoid membrane"/>
    <property type="evidence" value="ECO:0007669"/>
    <property type="project" value="UniProtKB-SubCell"/>
</dbReference>
<dbReference type="GO" id="GO:0051539">
    <property type="term" value="F:4 iron, 4 sulfur cluster binding"/>
    <property type="evidence" value="ECO:0007669"/>
    <property type="project" value="UniProtKB-KW"/>
</dbReference>
<dbReference type="GO" id="GO:0005506">
    <property type="term" value="F:iron ion binding"/>
    <property type="evidence" value="ECO:0007669"/>
    <property type="project" value="UniProtKB-UniRule"/>
</dbReference>
<dbReference type="GO" id="GO:0008137">
    <property type="term" value="F:NADH dehydrogenase (ubiquinone) activity"/>
    <property type="evidence" value="ECO:0007669"/>
    <property type="project" value="InterPro"/>
</dbReference>
<dbReference type="GO" id="GO:0048038">
    <property type="term" value="F:quinone binding"/>
    <property type="evidence" value="ECO:0007669"/>
    <property type="project" value="UniProtKB-KW"/>
</dbReference>
<dbReference type="GO" id="GO:0019684">
    <property type="term" value="P:photosynthesis, light reaction"/>
    <property type="evidence" value="ECO:0007669"/>
    <property type="project" value="UniProtKB-UniRule"/>
</dbReference>
<dbReference type="FunFam" id="3.30.70.3270:FF:000006">
    <property type="entry name" value="NAD(P)H-quinone oxidoreductase subunit I, chloroplastic"/>
    <property type="match status" value="1"/>
</dbReference>
<dbReference type="Gene3D" id="3.30.70.3270">
    <property type="match status" value="1"/>
</dbReference>
<dbReference type="HAMAP" id="MF_01351">
    <property type="entry name" value="NDH1_NuoI"/>
    <property type="match status" value="1"/>
</dbReference>
<dbReference type="InterPro" id="IPR017896">
    <property type="entry name" value="4Fe4S_Fe-S-bd"/>
</dbReference>
<dbReference type="InterPro" id="IPR017900">
    <property type="entry name" value="4Fe4S_Fe_S_CS"/>
</dbReference>
<dbReference type="InterPro" id="IPR010226">
    <property type="entry name" value="NADH_quinone_OxRdtase_chainI"/>
</dbReference>
<dbReference type="InterPro" id="IPR004497">
    <property type="entry name" value="NDHI"/>
</dbReference>
<dbReference type="NCBIfam" id="TIGR00403">
    <property type="entry name" value="ndhI"/>
    <property type="match status" value="1"/>
</dbReference>
<dbReference type="NCBIfam" id="TIGR01971">
    <property type="entry name" value="NuoI"/>
    <property type="match status" value="1"/>
</dbReference>
<dbReference type="NCBIfam" id="NF004537">
    <property type="entry name" value="PRK05888.1-3"/>
    <property type="match status" value="1"/>
</dbReference>
<dbReference type="PANTHER" id="PTHR47275">
    <property type="entry name" value="NAD(P)H-QUINONE OXIDOREDUCTASE SUBUNIT I, CHLOROPLASTIC"/>
    <property type="match status" value="1"/>
</dbReference>
<dbReference type="PANTHER" id="PTHR47275:SF1">
    <property type="entry name" value="NAD(P)H-QUINONE OXIDOREDUCTASE SUBUNIT I, CHLOROPLASTIC"/>
    <property type="match status" value="1"/>
</dbReference>
<dbReference type="Pfam" id="PF00037">
    <property type="entry name" value="Fer4"/>
    <property type="match status" value="2"/>
</dbReference>
<dbReference type="SUPFAM" id="SSF54862">
    <property type="entry name" value="4Fe-4S ferredoxins"/>
    <property type="match status" value="1"/>
</dbReference>
<dbReference type="PROSITE" id="PS00198">
    <property type="entry name" value="4FE4S_FER_1"/>
    <property type="match status" value="2"/>
</dbReference>
<dbReference type="PROSITE" id="PS51379">
    <property type="entry name" value="4FE4S_FER_2"/>
    <property type="match status" value="2"/>
</dbReference>
<proteinExistence type="inferred from homology"/>